<dbReference type="EMBL" id="CP000724">
    <property type="protein sequence ID" value="ABR46955.1"/>
    <property type="molecule type" value="Genomic_DNA"/>
</dbReference>
<dbReference type="RefSeq" id="WP_012061998.1">
    <property type="nucleotide sequence ID" value="NC_009633.1"/>
</dbReference>
<dbReference type="SMR" id="A6TL87"/>
<dbReference type="STRING" id="293826.Amet_0730"/>
<dbReference type="KEGG" id="amt:Amet_0730"/>
<dbReference type="eggNOG" id="COG1699">
    <property type="taxonomic scope" value="Bacteria"/>
</dbReference>
<dbReference type="HOGENOM" id="CLU_112356_0_2_9"/>
<dbReference type="OrthoDB" id="9801235at2"/>
<dbReference type="Proteomes" id="UP000001572">
    <property type="component" value="Chromosome"/>
</dbReference>
<dbReference type="GO" id="GO:0005737">
    <property type="term" value="C:cytoplasm"/>
    <property type="evidence" value="ECO:0007669"/>
    <property type="project" value="UniProtKB-SubCell"/>
</dbReference>
<dbReference type="GO" id="GO:0044780">
    <property type="term" value="P:bacterial-type flagellum assembly"/>
    <property type="evidence" value="ECO:0007669"/>
    <property type="project" value="UniProtKB-UniRule"/>
</dbReference>
<dbReference type="GO" id="GO:0006417">
    <property type="term" value="P:regulation of translation"/>
    <property type="evidence" value="ECO:0007669"/>
    <property type="project" value="UniProtKB-KW"/>
</dbReference>
<dbReference type="Gene3D" id="2.30.290.10">
    <property type="entry name" value="BH3618-like"/>
    <property type="match status" value="1"/>
</dbReference>
<dbReference type="HAMAP" id="MF_01185">
    <property type="entry name" value="FliW"/>
    <property type="match status" value="1"/>
</dbReference>
<dbReference type="InterPro" id="IPR003775">
    <property type="entry name" value="Flagellar_assembly_factor_FliW"/>
</dbReference>
<dbReference type="InterPro" id="IPR024046">
    <property type="entry name" value="Flagellar_assmbl_FliW_dom_sf"/>
</dbReference>
<dbReference type="NCBIfam" id="NF009793">
    <property type="entry name" value="PRK13285.1-1"/>
    <property type="match status" value="1"/>
</dbReference>
<dbReference type="NCBIfam" id="NF009798">
    <property type="entry name" value="PRK13285.2-1"/>
    <property type="match status" value="1"/>
</dbReference>
<dbReference type="PANTHER" id="PTHR39190">
    <property type="entry name" value="FLAGELLAR ASSEMBLY FACTOR FLIW"/>
    <property type="match status" value="1"/>
</dbReference>
<dbReference type="PANTHER" id="PTHR39190:SF1">
    <property type="entry name" value="FLAGELLAR ASSEMBLY FACTOR FLIW"/>
    <property type="match status" value="1"/>
</dbReference>
<dbReference type="Pfam" id="PF02623">
    <property type="entry name" value="FliW"/>
    <property type="match status" value="1"/>
</dbReference>
<dbReference type="SUPFAM" id="SSF141457">
    <property type="entry name" value="BH3618-like"/>
    <property type="match status" value="1"/>
</dbReference>
<proteinExistence type="inferred from homology"/>
<sequence length="162" mass="18790">MILQTKHFGEIEINQEEIIRFPDGIPGFDDYTQYIFIENPDKEVPFHWLQAVEDGALAFVITNPFLFKPDYDFEISKNVVEKLSIEDQSDLQVYTIVRVPENIKEMTANLRAPLVINTKNKKGKQLMLDSEVYHTKHYILEEIQKMQEQSNQTSPAAEGGRD</sequence>
<feature type="chain" id="PRO_1000138247" description="Flagellar assembly factor FliW">
    <location>
        <begin position="1"/>
        <end position="162"/>
    </location>
</feature>
<gene>
    <name evidence="1" type="primary">fliW</name>
    <name type="ordered locus">Amet_0730</name>
</gene>
<keyword id="KW-1005">Bacterial flagellum biogenesis</keyword>
<keyword id="KW-0143">Chaperone</keyword>
<keyword id="KW-0963">Cytoplasm</keyword>
<keyword id="KW-1185">Reference proteome</keyword>
<keyword id="KW-0810">Translation regulation</keyword>
<organism>
    <name type="scientific">Alkaliphilus metalliredigens (strain QYMF)</name>
    <dbReference type="NCBI Taxonomy" id="293826"/>
    <lineage>
        <taxon>Bacteria</taxon>
        <taxon>Bacillati</taxon>
        <taxon>Bacillota</taxon>
        <taxon>Clostridia</taxon>
        <taxon>Peptostreptococcales</taxon>
        <taxon>Natronincolaceae</taxon>
        <taxon>Alkaliphilus</taxon>
    </lineage>
</organism>
<accession>A6TL87</accession>
<comment type="function">
    <text evidence="1">Acts as an anti-CsrA protein, binds CsrA and prevents it from repressing translation of its target genes, one of which is flagellin. Binds to flagellin and participates in the assembly of the flagellum.</text>
</comment>
<comment type="subunit">
    <text evidence="1">Interacts with translational regulator CsrA and flagellin(s).</text>
</comment>
<comment type="subcellular location">
    <subcellularLocation>
        <location evidence="1">Cytoplasm</location>
    </subcellularLocation>
</comment>
<comment type="similarity">
    <text evidence="1">Belongs to the FliW family.</text>
</comment>
<protein>
    <recommendedName>
        <fullName evidence="1">Flagellar assembly factor FliW</fullName>
    </recommendedName>
</protein>
<evidence type="ECO:0000255" key="1">
    <source>
        <dbReference type="HAMAP-Rule" id="MF_01185"/>
    </source>
</evidence>
<reference key="1">
    <citation type="journal article" date="2016" name="Genome Announc.">
        <title>Complete genome sequence of Alkaliphilus metalliredigens strain QYMF, an alkaliphilic and metal-reducing bacterium isolated from borax-contaminated leachate ponds.</title>
        <authorList>
            <person name="Hwang C."/>
            <person name="Copeland A."/>
            <person name="Lucas S."/>
            <person name="Lapidus A."/>
            <person name="Barry K."/>
            <person name="Detter J.C."/>
            <person name="Glavina Del Rio T."/>
            <person name="Hammon N."/>
            <person name="Israni S."/>
            <person name="Dalin E."/>
            <person name="Tice H."/>
            <person name="Pitluck S."/>
            <person name="Chertkov O."/>
            <person name="Brettin T."/>
            <person name="Bruce D."/>
            <person name="Han C."/>
            <person name="Schmutz J."/>
            <person name="Larimer F."/>
            <person name="Land M.L."/>
            <person name="Hauser L."/>
            <person name="Kyrpides N."/>
            <person name="Mikhailova N."/>
            <person name="Ye Q."/>
            <person name="Zhou J."/>
            <person name="Richardson P."/>
            <person name="Fields M.W."/>
        </authorList>
    </citation>
    <scope>NUCLEOTIDE SEQUENCE [LARGE SCALE GENOMIC DNA]</scope>
    <source>
        <strain>QYMF</strain>
    </source>
</reference>
<name>FLIW_ALKMQ</name>